<protein>
    <recommendedName>
        <fullName>Ribosome hibernation promoting factor</fullName>
        <shortName>HPF</shortName>
    </recommendedName>
    <alternativeName>
        <fullName>Hibernation factor HPF</fullName>
    </alternativeName>
</protein>
<accession>P24694</accession>
<comment type="function">
    <text evidence="1">Required for dimerization of active 70S ribosomes into 100S ribosomes in stationary phase; 100S ribosomes are translationally inactive and sometimes present during exponential growth.</text>
</comment>
<comment type="subunit">
    <text evidence="1">Associates exclusively with 100S ribosomes, which are dimers of 70S ribosomes.</text>
</comment>
<comment type="similarity">
    <text evidence="2">Belongs to the HPF/YfiA ribosome-associated protein family. Long HPF subfamily.</text>
</comment>
<organism>
    <name type="scientific">Acidithiobacillus ferridurans</name>
    <dbReference type="NCBI Taxonomy" id="1232575"/>
    <lineage>
        <taxon>Bacteria</taxon>
        <taxon>Pseudomonadati</taxon>
        <taxon>Pseudomonadota</taxon>
        <taxon>Acidithiobacillia</taxon>
        <taxon>Acidithiobacillales</taxon>
        <taxon>Acidithiobacillaceae</taxon>
        <taxon>Acidithiobacillus</taxon>
    </lineage>
</organism>
<feature type="chain" id="PRO_0000097427" description="Ribosome hibernation promoting factor">
    <location>
        <begin position="1"/>
        <end position="78" status="greater than"/>
    </location>
</feature>
<feature type="non-terminal residue">
    <location>
        <position position="78"/>
    </location>
</feature>
<gene>
    <name type="primary">hpf</name>
</gene>
<dbReference type="EMBL" id="M58480">
    <property type="protein sequence ID" value="AAA27380.1"/>
    <property type="molecule type" value="Genomic_DNA"/>
</dbReference>
<dbReference type="PIR" id="C37761">
    <property type="entry name" value="C37761"/>
</dbReference>
<dbReference type="SMR" id="P24694"/>
<dbReference type="GO" id="GO:0022627">
    <property type="term" value="C:cytosolic small ribosomal subunit"/>
    <property type="evidence" value="ECO:0007669"/>
    <property type="project" value="TreeGrafter"/>
</dbReference>
<dbReference type="GO" id="GO:0043024">
    <property type="term" value="F:ribosomal small subunit binding"/>
    <property type="evidence" value="ECO:0007669"/>
    <property type="project" value="TreeGrafter"/>
</dbReference>
<dbReference type="GO" id="GO:0045900">
    <property type="term" value="P:negative regulation of translational elongation"/>
    <property type="evidence" value="ECO:0007669"/>
    <property type="project" value="TreeGrafter"/>
</dbReference>
<dbReference type="CDD" id="cd00552">
    <property type="entry name" value="RaiA"/>
    <property type="match status" value="1"/>
</dbReference>
<dbReference type="Gene3D" id="3.30.160.100">
    <property type="entry name" value="Ribosome hibernation promotion factor-like"/>
    <property type="match status" value="1"/>
</dbReference>
<dbReference type="InterPro" id="IPR050574">
    <property type="entry name" value="HPF/YfiA_ribosome-assoc"/>
</dbReference>
<dbReference type="InterPro" id="IPR036567">
    <property type="entry name" value="RHF-like"/>
</dbReference>
<dbReference type="InterPro" id="IPR003489">
    <property type="entry name" value="RHF/RaiA"/>
</dbReference>
<dbReference type="NCBIfam" id="TIGR00741">
    <property type="entry name" value="yfiA"/>
    <property type="match status" value="1"/>
</dbReference>
<dbReference type="PANTHER" id="PTHR33231">
    <property type="entry name" value="30S RIBOSOMAL PROTEIN"/>
    <property type="match status" value="1"/>
</dbReference>
<dbReference type="PANTHER" id="PTHR33231:SF1">
    <property type="entry name" value="30S RIBOSOMAL PROTEIN"/>
    <property type="match status" value="1"/>
</dbReference>
<dbReference type="Pfam" id="PF02482">
    <property type="entry name" value="Ribosomal_S30AE"/>
    <property type="match status" value="1"/>
</dbReference>
<dbReference type="SUPFAM" id="SSF69754">
    <property type="entry name" value="Ribosome binding protein Y (YfiA homologue)"/>
    <property type="match status" value="1"/>
</dbReference>
<name>HPF_ACIFI</name>
<keyword id="KW-0810">Translation regulation</keyword>
<reference key="1">
    <citation type="journal article" date="1990" name="J. Bacteriol.">
        <title>Complementation of Escherichia coli sigma 54 (NtrA)-dependent formate hydrogenlyase activity by a cloned Thiobacillus ferrooxidans ntrA gene.</title>
        <authorList>
            <person name="Berger D.K."/>
            <person name="Woods D.R."/>
            <person name="Rawlings D.E."/>
        </authorList>
    </citation>
    <scope>NUCLEOTIDE SEQUENCE [GENOMIC DNA]</scope>
    <source>
        <strain>ATCC 33020 / DSM 29468 / JCM 18981 / 11Fe</strain>
    </source>
</reference>
<sequence length="78" mass="8751">MQITITGQHLDLTDSIKNYADEKIGRLGRYFDHVSNAQVVLKHLPHEKLSNVVDITVNAPGHVFHAEVHDADMYTGID</sequence>
<evidence type="ECO:0000250" key="1">
    <source>
        <dbReference type="UniProtKB" id="Q2FIN9"/>
    </source>
</evidence>
<evidence type="ECO:0000305" key="2"/>
<proteinExistence type="inferred from homology"/>